<evidence type="ECO:0000255" key="1">
    <source>
        <dbReference type="HAMAP-Rule" id="MF_01107"/>
    </source>
</evidence>
<dbReference type="EC" id="2.6.1.11" evidence="1"/>
<dbReference type="EMBL" id="BA000035">
    <property type="protein sequence ID" value="BAC18339.1"/>
    <property type="molecule type" value="Genomic_DNA"/>
</dbReference>
<dbReference type="RefSeq" id="WP_006770437.1">
    <property type="nucleotide sequence ID" value="NC_004369.1"/>
</dbReference>
<dbReference type="SMR" id="Q8FTN2"/>
<dbReference type="STRING" id="196164.gene:10741944"/>
<dbReference type="KEGG" id="cef:CE1529"/>
<dbReference type="eggNOG" id="COG4992">
    <property type="taxonomic scope" value="Bacteria"/>
</dbReference>
<dbReference type="HOGENOM" id="CLU_016922_10_1_11"/>
<dbReference type="OrthoDB" id="9801052at2"/>
<dbReference type="UniPathway" id="UPA00068">
    <property type="reaction ID" value="UER00109"/>
</dbReference>
<dbReference type="Proteomes" id="UP000001409">
    <property type="component" value="Chromosome"/>
</dbReference>
<dbReference type="GO" id="GO:0005737">
    <property type="term" value="C:cytoplasm"/>
    <property type="evidence" value="ECO:0007669"/>
    <property type="project" value="UniProtKB-SubCell"/>
</dbReference>
<dbReference type="GO" id="GO:0042802">
    <property type="term" value="F:identical protein binding"/>
    <property type="evidence" value="ECO:0007669"/>
    <property type="project" value="TreeGrafter"/>
</dbReference>
<dbReference type="GO" id="GO:0003992">
    <property type="term" value="F:N2-acetyl-L-ornithine:2-oxoglutarate 5-aminotransferase activity"/>
    <property type="evidence" value="ECO:0007669"/>
    <property type="project" value="UniProtKB-UniRule"/>
</dbReference>
<dbReference type="GO" id="GO:0030170">
    <property type="term" value="F:pyridoxal phosphate binding"/>
    <property type="evidence" value="ECO:0007669"/>
    <property type="project" value="InterPro"/>
</dbReference>
<dbReference type="GO" id="GO:0006526">
    <property type="term" value="P:L-arginine biosynthetic process"/>
    <property type="evidence" value="ECO:0007669"/>
    <property type="project" value="UniProtKB-UniRule"/>
</dbReference>
<dbReference type="CDD" id="cd00610">
    <property type="entry name" value="OAT_like"/>
    <property type="match status" value="1"/>
</dbReference>
<dbReference type="FunFam" id="3.40.640.10:FF:000004">
    <property type="entry name" value="Acetylornithine aminotransferase"/>
    <property type="match status" value="1"/>
</dbReference>
<dbReference type="Gene3D" id="3.90.1150.10">
    <property type="entry name" value="Aspartate Aminotransferase, domain 1"/>
    <property type="match status" value="1"/>
</dbReference>
<dbReference type="Gene3D" id="3.40.640.10">
    <property type="entry name" value="Type I PLP-dependent aspartate aminotransferase-like (Major domain)"/>
    <property type="match status" value="1"/>
</dbReference>
<dbReference type="HAMAP" id="MF_01107">
    <property type="entry name" value="ArgD_aminotrans_3"/>
    <property type="match status" value="1"/>
</dbReference>
<dbReference type="InterPro" id="IPR004636">
    <property type="entry name" value="AcOrn/SuccOrn_fam"/>
</dbReference>
<dbReference type="InterPro" id="IPR005814">
    <property type="entry name" value="Aminotrans_3"/>
</dbReference>
<dbReference type="InterPro" id="IPR049704">
    <property type="entry name" value="Aminotrans_3_PPA_site"/>
</dbReference>
<dbReference type="InterPro" id="IPR050103">
    <property type="entry name" value="Class-III_PLP-dep_AT"/>
</dbReference>
<dbReference type="InterPro" id="IPR015424">
    <property type="entry name" value="PyrdxlP-dep_Trfase"/>
</dbReference>
<dbReference type="InterPro" id="IPR015421">
    <property type="entry name" value="PyrdxlP-dep_Trfase_major"/>
</dbReference>
<dbReference type="InterPro" id="IPR015422">
    <property type="entry name" value="PyrdxlP-dep_Trfase_small"/>
</dbReference>
<dbReference type="NCBIfam" id="TIGR00707">
    <property type="entry name" value="argD"/>
    <property type="match status" value="1"/>
</dbReference>
<dbReference type="NCBIfam" id="NF002325">
    <property type="entry name" value="PRK01278.1"/>
    <property type="match status" value="1"/>
</dbReference>
<dbReference type="NCBIfam" id="NF002874">
    <property type="entry name" value="PRK03244.1"/>
    <property type="match status" value="1"/>
</dbReference>
<dbReference type="PANTHER" id="PTHR11986:SF79">
    <property type="entry name" value="ACETYLORNITHINE AMINOTRANSFERASE, MITOCHONDRIAL"/>
    <property type="match status" value="1"/>
</dbReference>
<dbReference type="PANTHER" id="PTHR11986">
    <property type="entry name" value="AMINOTRANSFERASE CLASS III"/>
    <property type="match status" value="1"/>
</dbReference>
<dbReference type="Pfam" id="PF00202">
    <property type="entry name" value="Aminotran_3"/>
    <property type="match status" value="1"/>
</dbReference>
<dbReference type="PIRSF" id="PIRSF000521">
    <property type="entry name" value="Transaminase_4ab_Lys_Orn"/>
    <property type="match status" value="1"/>
</dbReference>
<dbReference type="SUPFAM" id="SSF53383">
    <property type="entry name" value="PLP-dependent transferases"/>
    <property type="match status" value="1"/>
</dbReference>
<dbReference type="PROSITE" id="PS00600">
    <property type="entry name" value="AA_TRANSFER_CLASS_3"/>
    <property type="match status" value="1"/>
</dbReference>
<name>ARGD_COREF</name>
<gene>
    <name evidence="1" type="primary">argD</name>
    <name type="ordered locus">CE1529</name>
</gene>
<sequence length="402" mass="41980">MKNLATVEDTLTSWPQVLLNTYGTPPVELVTGKGSTVTDADGNVYIDLLAGIAVNALGHAHPAIIEAVTTQLSQLGHVSNLFATRPVVEVAAELVQRFALDDATIASQTQVFFCNSGAEANEAAFKLARLTGRHRILAATNGFHGRTMGSLALTGQPDKRIPFAPLPSGVEFYPYGDLDYLTTLVESDPTDTAAIILEPIQGETGVIPAPEGFLTGVRELCDKHGLLFIVDEVQTGIGRTGDFFAHQHEGVTPDVVTMAKGLGGGLPIGACLATGEAAKLFGPGKHGTTFGGNPVSAAAARAVLSVIDEEFCADVARKGELFAEQLRGVAGVADVRGRGLMLGVVLDQPVAKQAVTAGFKHGLILNAPADNIIRLTPPLVITDDEIRDAVRALAAVLAELNA</sequence>
<feature type="chain" id="PRO_0000112740" description="Acetylornithine aminotransferase">
    <location>
        <begin position="1"/>
        <end position="402"/>
    </location>
</feature>
<feature type="binding site" evidence="1">
    <location>
        <begin position="117"/>
        <end position="118"/>
    </location>
    <ligand>
        <name>pyridoxal 5'-phosphate</name>
        <dbReference type="ChEBI" id="CHEBI:597326"/>
    </ligand>
</feature>
<feature type="binding site" evidence="1">
    <location>
        <position position="143"/>
    </location>
    <ligand>
        <name>pyridoxal 5'-phosphate</name>
        <dbReference type="ChEBI" id="CHEBI:597326"/>
    </ligand>
</feature>
<feature type="binding site" evidence="1">
    <location>
        <position position="146"/>
    </location>
    <ligand>
        <name>N(2)-acetyl-L-ornithine</name>
        <dbReference type="ChEBI" id="CHEBI:57805"/>
    </ligand>
</feature>
<feature type="binding site" evidence="1">
    <location>
        <begin position="231"/>
        <end position="234"/>
    </location>
    <ligand>
        <name>pyridoxal 5'-phosphate</name>
        <dbReference type="ChEBI" id="CHEBI:597326"/>
    </ligand>
</feature>
<feature type="binding site" evidence="1">
    <location>
        <position position="288"/>
    </location>
    <ligand>
        <name>N(2)-acetyl-L-ornithine</name>
        <dbReference type="ChEBI" id="CHEBI:57805"/>
    </ligand>
</feature>
<feature type="binding site" evidence="1">
    <location>
        <position position="289"/>
    </location>
    <ligand>
        <name>pyridoxal 5'-phosphate</name>
        <dbReference type="ChEBI" id="CHEBI:597326"/>
    </ligand>
</feature>
<feature type="modified residue" description="N6-(pyridoxal phosphate)lysine" evidence="1">
    <location>
        <position position="260"/>
    </location>
</feature>
<accession>Q8FTN2</accession>
<comment type="catalytic activity">
    <reaction evidence="1">
        <text>N(2)-acetyl-L-ornithine + 2-oxoglutarate = N-acetyl-L-glutamate 5-semialdehyde + L-glutamate</text>
        <dbReference type="Rhea" id="RHEA:18049"/>
        <dbReference type="ChEBI" id="CHEBI:16810"/>
        <dbReference type="ChEBI" id="CHEBI:29123"/>
        <dbReference type="ChEBI" id="CHEBI:29985"/>
        <dbReference type="ChEBI" id="CHEBI:57805"/>
        <dbReference type="EC" id="2.6.1.11"/>
    </reaction>
</comment>
<comment type="cofactor">
    <cofactor evidence="1">
        <name>pyridoxal 5'-phosphate</name>
        <dbReference type="ChEBI" id="CHEBI:597326"/>
    </cofactor>
    <text evidence="1">Binds 1 pyridoxal phosphate per subunit.</text>
</comment>
<comment type="pathway">
    <text evidence="1">Amino-acid biosynthesis; L-arginine biosynthesis; N(2)-acetyl-L-ornithine from L-glutamate: step 4/4.</text>
</comment>
<comment type="subunit">
    <text evidence="1">Homodimer.</text>
</comment>
<comment type="subcellular location">
    <subcellularLocation>
        <location evidence="1">Cytoplasm</location>
    </subcellularLocation>
</comment>
<comment type="miscellaneous">
    <text evidence="1">May also have succinyldiaminopimelate aminotransferase activity, thus carrying out the corresponding step in lysine biosynthesis.</text>
</comment>
<comment type="similarity">
    <text evidence="1">Belongs to the class-III pyridoxal-phosphate-dependent aminotransferase family. ArgD subfamily.</text>
</comment>
<proteinExistence type="inferred from homology"/>
<keyword id="KW-0028">Amino-acid biosynthesis</keyword>
<keyword id="KW-0032">Aminotransferase</keyword>
<keyword id="KW-0055">Arginine biosynthesis</keyword>
<keyword id="KW-0963">Cytoplasm</keyword>
<keyword id="KW-0663">Pyridoxal phosphate</keyword>
<keyword id="KW-1185">Reference proteome</keyword>
<keyword id="KW-0808">Transferase</keyword>
<reference key="1">
    <citation type="journal article" date="2003" name="Genome Res.">
        <title>Comparative complete genome sequence analysis of the amino acid replacements responsible for the thermostability of Corynebacterium efficiens.</title>
        <authorList>
            <person name="Nishio Y."/>
            <person name="Nakamura Y."/>
            <person name="Kawarabayasi Y."/>
            <person name="Usuda Y."/>
            <person name="Kimura E."/>
            <person name="Sugimoto S."/>
            <person name="Matsui K."/>
            <person name="Yamagishi A."/>
            <person name="Kikuchi H."/>
            <person name="Ikeo K."/>
            <person name="Gojobori T."/>
        </authorList>
    </citation>
    <scope>NUCLEOTIDE SEQUENCE [LARGE SCALE GENOMIC DNA]</scope>
    <source>
        <strain>DSM 44549 / YS-314 / AJ 12310 / JCM 11189 / NBRC 100395</strain>
    </source>
</reference>
<organism>
    <name type="scientific">Corynebacterium efficiens (strain DSM 44549 / YS-314 / AJ 12310 / JCM 11189 / NBRC 100395)</name>
    <dbReference type="NCBI Taxonomy" id="196164"/>
    <lineage>
        <taxon>Bacteria</taxon>
        <taxon>Bacillati</taxon>
        <taxon>Actinomycetota</taxon>
        <taxon>Actinomycetes</taxon>
        <taxon>Mycobacteriales</taxon>
        <taxon>Corynebacteriaceae</taxon>
        <taxon>Corynebacterium</taxon>
    </lineage>
</organism>
<protein>
    <recommendedName>
        <fullName evidence="1">Acetylornithine aminotransferase</fullName>
        <shortName evidence="1">ACOAT</shortName>
        <ecNumber evidence="1">2.6.1.11</ecNumber>
    </recommendedName>
</protein>